<reference key="1">
    <citation type="journal article" date="2007" name="FEBS J.">
        <title>Sequences, geographic variations and molecular phylogeny of venom phospholipases and three-finger toxins of eastern India Bungarus fasciatus and kinetic analyses of its Pro31 phospholipases A2.</title>
        <authorList>
            <person name="Tsai I.-H."/>
            <person name="Tsai H.-Y."/>
            <person name="Saha A."/>
            <person name="Gomes A."/>
        </authorList>
    </citation>
    <scope>NUCLEOTIDE SEQUENCE [MRNA]</scope>
    <scope>PROTEIN SEQUENCE OF 22-39</scope>
    <scope>MASS SPECTROMETRY</scope>
    <scope>SUBCELLULAR LOCATION</scope>
    <source>
        <tissue>Venom</tissue>
        <tissue>Venom gland</tissue>
    </source>
</reference>
<sequence length="86" mass="9723">MKTLLLTLVVVTIVCLDLGYTLTCLICPEKYCQKVHTCRDGENLCVKRFYEGKRFGKKYPRGCAATCPEAKPHEIVECCSTDKCNK</sequence>
<dbReference type="EMBL" id="DQ835583">
    <property type="protein sequence ID" value="ABI33871.1"/>
    <property type="molecule type" value="mRNA"/>
</dbReference>
<dbReference type="SMR" id="A2CKF7"/>
<dbReference type="GO" id="GO:0005576">
    <property type="term" value="C:extracellular region"/>
    <property type="evidence" value="ECO:0007669"/>
    <property type="project" value="UniProtKB-SubCell"/>
</dbReference>
<dbReference type="GO" id="GO:0030550">
    <property type="term" value="F:acetylcholine receptor inhibitor activity"/>
    <property type="evidence" value="ECO:0007669"/>
    <property type="project" value="UniProtKB-KW"/>
</dbReference>
<dbReference type="GO" id="GO:0099106">
    <property type="term" value="F:ion channel regulator activity"/>
    <property type="evidence" value="ECO:0007669"/>
    <property type="project" value="UniProtKB-KW"/>
</dbReference>
<dbReference type="GO" id="GO:0090729">
    <property type="term" value="F:toxin activity"/>
    <property type="evidence" value="ECO:0007669"/>
    <property type="project" value="UniProtKB-KW"/>
</dbReference>
<dbReference type="CDD" id="cd00206">
    <property type="entry name" value="TFP_snake_toxin"/>
    <property type="match status" value="1"/>
</dbReference>
<dbReference type="FunFam" id="2.10.60.10:FF:000024">
    <property type="entry name" value="Cytotoxin 1"/>
    <property type="match status" value="1"/>
</dbReference>
<dbReference type="Gene3D" id="2.10.60.10">
    <property type="entry name" value="CD59"/>
    <property type="match status" value="1"/>
</dbReference>
<dbReference type="InterPro" id="IPR003571">
    <property type="entry name" value="Snake_3FTx"/>
</dbReference>
<dbReference type="InterPro" id="IPR045860">
    <property type="entry name" value="Snake_toxin-like_sf"/>
</dbReference>
<dbReference type="InterPro" id="IPR018354">
    <property type="entry name" value="Snake_toxin_con_site"/>
</dbReference>
<dbReference type="InterPro" id="IPR054131">
    <property type="entry name" value="Toxin_cobra-type"/>
</dbReference>
<dbReference type="Pfam" id="PF21947">
    <property type="entry name" value="Toxin_cobra-type"/>
    <property type="match status" value="1"/>
</dbReference>
<dbReference type="SUPFAM" id="SSF57302">
    <property type="entry name" value="Snake toxin-like"/>
    <property type="match status" value="1"/>
</dbReference>
<dbReference type="PROSITE" id="PS00272">
    <property type="entry name" value="SNAKE_TOXIN"/>
    <property type="match status" value="1"/>
</dbReference>
<proteinExistence type="evidence at protein level"/>
<evidence type="ECO:0000250" key="1">
    <source>
        <dbReference type="UniProtKB" id="O42255"/>
    </source>
</evidence>
<evidence type="ECO:0000250" key="2">
    <source>
        <dbReference type="UniProtKB" id="Q8AY51"/>
    </source>
</evidence>
<evidence type="ECO:0000269" key="3">
    <source>
    </source>
</evidence>
<evidence type="ECO:0000305" key="4"/>
<evidence type="ECO:0000305" key="5">
    <source>
    </source>
</evidence>
<accession>A2CKF7</accession>
<keyword id="KW-0008">Acetylcholine receptor inhibiting toxin</keyword>
<keyword id="KW-0903">Direct protein sequencing</keyword>
<keyword id="KW-1015">Disulfide bond</keyword>
<keyword id="KW-0872">Ion channel impairing toxin</keyword>
<keyword id="KW-0528">Neurotoxin</keyword>
<keyword id="KW-0629">Postsynaptic neurotoxin</keyword>
<keyword id="KW-0964">Secreted</keyword>
<keyword id="KW-0732">Signal</keyword>
<keyword id="KW-0800">Toxin</keyword>
<protein>
    <recommendedName>
        <fullName>Neurotoxin 3FTx-LT</fullName>
    </recommendedName>
</protein>
<name>3NO2_BUNFA</name>
<feature type="signal peptide" evidence="3">
    <location>
        <begin position="1"/>
        <end position="21"/>
    </location>
</feature>
<feature type="chain" id="PRO_0000293103" description="Neurotoxin 3FTx-LT" evidence="5">
    <location>
        <begin position="22"/>
        <end position="86"/>
    </location>
</feature>
<feature type="disulfide bond" evidence="2">
    <location>
        <begin position="24"/>
        <end position="45"/>
    </location>
</feature>
<feature type="disulfide bond" evidence="2">
    <location>
        <begin position="27"/>
        <end position="32"/>
    </location>
</feature>
<feature type="disulfide bond" evidence="2">
    <location>
        <begin position="38"/>
        <end position="63"/>
    </location>
</feature>
<feature type="disulfide bond" evidence="2">
    <location>
        <begin position="67"/>
        <end position="78"/>
    </location>
</feature>
<feature type="disulfide bond" evidence="2">
    <location>
        <begin position="79"/>
        <end position="84"/>
    </location>
</feature>
<comment type="function">
    <text evidence="1">Binds with low affinity to muscular (alpha-1-beta-1-delta-epsilon/CHRNA1-CHRNB1-CHRND-CHRNE) and very low affinity to neuronal (alpha-7/CHRNA7) nicotinic acetylcholine receptor (nAChR).</text>
</comment>
<comment type="subcellular location">
    <subcellularLocation>
        <location evidence="3">Secreted</location>
    </subcellularLocation>
</comment>
<comment type="tissue specificity">
    <text evidence="4">Expressed by the venom gland.</text>
</comment>
<comment type="mass spectrometry" mass="7421.0" error="1.0" method="Electrospray" evidence="3"/>
<comment type="similarity">
    <text evidence="4">Belongs to the three-finger toxin family. Ancestral subfamily. Orphan group II sub-subfamily.</text>
</comment>
<organism>
    <name type="scientific">Bungarus fasciatus</name>
    <name type="common">Banded krait</name>
    <name type="synonym">Pseudoboa fasciata</name>
    <dbReference type="NCBI Taxonomy" id="8613"/>
    <lineage>
        <taxon>Eukaryota</taxon>
        <taxon>Metazoa</taxon>
        <taxon>Chordata</taxon>
        <taxon>Craniata</taxon>
        <taxon>Vertebrata</taxon>
        <taxon>Euteleostomi</taxon>
        <taxon>Lepidosauria</taxon>
        <taxon>Squamata</taxon>
        <taxon>Bifurcata</taxon>
        <taxon>Unidentata</taxon>
        <taxon>Episquamata</taxon>
        <taxon>Toxicofera</taxon>
        <taxon>Serpentes</taxon>
        <taxon>Colubroidea</taxon>
        <taxon>Elapidae</taxon>
        <taxon>Bungarinae</taxon>
        <taxon>Bungarus</taxon>
    </lineage>
</organism>